<keyword id="KW-0255">Endonuclease</keyword>
<keyword id="KW-0378">Hydrolase</keyword>
<keyword id="KW-0540">Nuclease</keyword>
<keyword id="KW-0548">Nucleotidyltransferase</keyword>
<keyword id="KW-1185">Reference proteome</keyword>
<keyword id="KW-0695">RNA-directed DNA polymerase</keyword>
<keyword id="KW-0808">Transferase</keyword>
<keyword id="KW-0814">Transposable element</keyword>
<comment type="catalytic activity">
    <reaction>
        <text>DNA(n) + a 2'-deoxyribonucleoside 5'-triphosphate = DNA(n+1) + diphosphate</text>
        <dbReference type="Rhea" id="RHEA:22508"/>
        <dbReference type="Rhea" id="RHEA-COMP:17339"/>
        <dbReference type="Rhea" id="RHEA-COMP:17340"/>
        <dbReference type="ChEBI" id="CHEBI:33019"/>
        <dbReference type="ChEBI" id="CHEBI:61560"/>
        <dbReference type="ChEBI" id="CHEBI:173112"/>
        <dbReference type="EC" id="2.7.7.49"/>
    </reaction>
</comment>
<organism>
    <name type="scientific">Nasonia vitripennis</name>
    <name type="common">Parasitic wasp</name>
    <dbReference type="NCBI Taxonomy" id="7425"/>
    <lineage>
        <taxon>Eukaryota</taxon>
        <taxon>Metazoa</taxon>
        <taxon>Ecdysozoa</taxon>
        <taxon>Arthropoda</taxon>
        <taxon>Hexapoda</taxon>
        <taxon>Insecta</taxon>
        <taxon>Pterygota</taxon>
        <taxon>Neoptera</taxon>
        <taxon>Endopterygota</taxon>
        <taxon>Hymenoptera</taxon>
        <taxon>Apocrita</taxon>
        <taxon>Proctotrupomorpha</taxon>
        <taxon>Chalcidoidea</taxon>
        <taxon>Pteromalidae</taxon>
        <taxon>Pteromalinae</taxon>
        <taxon>Nasonia</taxon>
    </lineage>
</organism>
<proteinExistence type="predicted"/>
<feature type="chain" id="PRO_0000058496" description="Retrovirus-related Pol polyprotein from type-1 retrotransposable element R1 4">
    <location>
        <begin position="1" status="less than"/>
        <end position="392"/>
    </location>
</feature>
<feature type="domain" description="Reverse transcriptase">
    <location>
        <begin position="1" status="less than"/>
        <end position="230"/>
    </location>
</feature>
<feature type="region of interest" description="Nucleic acid-binding endonuclease">
    <location>
        <begin position="231"/>
        <end position="392"/>
    </location>
</feature>
<feature type="non-terminal residue">
    <location>
        <position position="1"/>
    </location>
</feature>
<dbReference type="EC" id="2.7.7.49"/>
<dbReference type="EMBL" id="L00943">
    <property type="protein sequence ID" value="AAA30340.1"/>
    <property type="molecule type" value="Genomic_DNA"/>
</dbReference>
<dbReference type="PIR" id="E44490">
    <property type="entry name" value="E44490"/>
</dbReference>
<dbReference type="InParanoid" id="Q03272"/>
<dbReference type="OrthoDB" id="6516885at2759"/>
<dbReference type="Proteomes" id="UP000002358">
    <property type="component" value="Unplaced"/>
</dbReference>
<dbReference type="GO" id="GO:0004519">
    <property type="term" value="F:endonuclease activity"/>
    <property type="evidence" value="ECO:0007669"/>
    <property type="project" value="UniProtKB-KW"/>
</dbReference>
<dbReference type="GO" id="GO:0003964">
    <property type="term" value="F:RNA-directed DNA polymerase activity"/>
    <property type="evidence" value="ECO:0007669"/>
    <property type="project" value="UniProtKB-KW"/>
</dbReference>
<name>PO14_NASVI</name>
<reference key="1">
    <citation type="journal article" date="1993" name="Mol. Biol. Evol.">
        <title>Sequence relationship of retrotransposable elements R1 and R2 within and between divergent insect species.</title>
        <authorList>
            <person name="Burke W.D."/>
            <person name="Eickbush D.G."/>
            <person name="Xiong Y."/>
            <person name="Jakubczak J.L."/>
            <person name="Eickbush T.H."/>
        </authorList>
    </citation>
    <scope>NUCLEOTIDE SEQUENCE [GENOMIC DNA]</scope>
</reference>
<protein>
    <recommendedName>
        <fullName>Retrovirus-related Pol polyprotein from type-1 retrotransposable element R1 4</fullName>
    </recommendedName>
    <alternativeName>
        <fullName>Retrovirus-related Pol polyprotein from type I retrotransposable element R1 4</fullName>
    </alternativeName>
    <domain>
        <recommendedName>
            <fullName>Reverse transcriptase</fullName>
            <ecNumber>2.7.7.49</ecNumber>
        </recommendedName>
    </domain>
    <domain>
        <recommendedName>
            <fullName>Endonuclease</fullName>
        </recommendedName>
    </domain>
</protein>
<accession>Q03272</accession>
<sequence>PFADDLAVLVEGDSRAEIEKVGKAVVKHIVERCSAIKLEVSESKTVGIFVKKPKVVGSKAVKINRKDCRKGGARNLKIELGGKSISFEQSVRYLGVHFDANLGISAHCKYLREKLVPLFSDLRKLAQCQWGLGHKALETIYKGVFVPTVCYASARWYKEGAHTDRILEDLHRQILIAITRCYRSTSYEAACVLAGTLPICIQLRVSVAKYHLRKGEDAEIGGVVIRRRPEGLKENYNRVLEVANEMWQARWEASEQGNATRELFFPDVVARVKSDWIRPDHFTSQVLTGHGYYNEKLHQLSLAKAAACICCGEPDNNLHFLLECPAFAEFRDELITPVSGGLEAPEATLMLVSSPEGFAALKEYSRVAFECKRQLENALTESDEGLSSESEE</sequence>